<keyword id="KW-0119">Carbohydrate metabolism</keyword>
<keyword id="KW-0413">Isomerase</keyword>
<name>NANE_SYNP6</name>
<gene>
    <name evidence="1" type="primary">nanE</name>
    <name type="ordered locus">syc1640_d</name>
</gene>
<sequence>MDRQQQLRRLQGGLIVSCQAPADSPLHQPEIIAAIAVAAVQRGAVGIRLDTPEHVRAVRDRLPETPIIGLWKRTFPDSSVYITPRYVEAEAIAAAGADIVALDCTLRPRPDGEDFCQIIPRLQQELGCAVMADIDTLEAAIAAAKAGADLVGTTLYGYTEATQGQTPPGWDLLETAAQQLPNTPVICEGGIASAQAARQACDRGAFAVVVGTAITGIDLQVQAYVTALNARP</sequence>
<proteinExistence type="inferred from homology"/>
<accession>Q5N1J0</accession>
<protein>
    <recommendedName>
        <fullName evidence="1">Putative N-acetylmannosamine-6-phosphate 2-epimerase</fullName>
        <ecNumber evidence="1">5.1.3.9</ecNumber>
    </recommendedName>
    <alternativeName>
        <fullName evidence="1">ManNAc-6-P epimerase</fullName>
    </alternativeName>
</protein>
<comment type="function">
    <text evidence="1">Converts N-acetylmannosamine-6-phosphate (ManNAc-6-P) to N-acetylglucosamine-6-phosphate (GlcNAc-6-P).</text>
</comment>
<comment type="catalytic activity">
    <reaction evidence="1">
        <text>an N-acyl-D-glucosamine 6-phosphate = an N-acyl-D-mannosamine 6-phosphate</text>
        <dbReference type="Rhea" id="RHEA:23932"/>
        <dbReference type="ChEBI" id="CHEBI:57599"/>
        <dbReference type="ChEBI" id="CHEBI:57666"/>
        <dbReference type="EC" id="5.1.3.9"/>
    </reaction>
</comment>
<comment type="pathway">
    <text evidence="1">Amino-sugar metabolism; N-acetylneuraminate degradation; D-fructose 6-phosphate from N-acetylneuraminate: step 3/5.</text>
</comment>
<comment type="similarity">
    <text evidence="1">Belongs to the NanE family.</text>
</comment>
<reference key="1">
    <citation type="journal article" date="2007" name="Photosyn. Res.">
        <title>Complete nucleotide sequence of the freshwater unicellular cyanobacterium Synechococcus elongatus PCC 6301 chromosome: gene content and organization.</title>
        <authorList>
            <person name="Sugita C."/>
            <person name="Ogata K."/>
            <person name="Shikata M."/>
            <person name="Jikuya H."/>
            <person name="Takano J."/>
            <person name="Furumichi M."/>
            <person name="Kanehisa M."/>
            <person name="Omata T."/>
            <person name="Sugiura M."/>
            <person name="Sugita M."/>
        </authorList>
    </citation>
    <scope>NUCLEOTIDE SEQUENCE [LARGE SCALE GENOMIC DNA]</scope>
    <source>
        <strain>ATCC 27144 / PCC 6301 / SAUG 1402/1</strain>
    </source>
</reference>
<organism>
    <name type="scientific">Synechococcus sp. (strain ATCC 27144 / PCC 6301 / SAUG 1402/1)</name>
    <name type="common">Anacystis nidulans</name>
    <dbReference type="NCBI Taxonomy" id="269084"/>
    <lineage>
        <taxon>Bacteria</taxon>
        <taxon>Bacillati</taxon>
        <taxon>Cyanobacteriota</taxon>
        <taxon>Cyanophyceae</taxon>
        <taxon>Synechococcales</taxon>
        <taxon>Synechococcaceae</taxon>
        <taxon>Synechococcus</taxon>
    </lineage>
</organism>
<feature type="chain" id="PRO_0000179815" description="Putative N-acetylmannosamine-6-phosphate 2-epimerase">
    <location>
        <begin position="1"/>
        <end position="232"/>
    </location>
</feature>
<dbReference type="EC" id="5.1.3.9" evidence="1"/>
<dbReference type="EMBL" id="AP008231">
    <property type="protein sequence ID" value="BAD79830.1"/>
    <property type="molecule type" value="Genomic_DNA"/>
</dbReference>
<dbReference type="RefSeq" id="WP_011243950.1">
    <property type="nucleotide sequence ID" value="NZ_CP085785.1"/>
</dbReference>
<dbReference type="SMR" id="Q5N1J0"/>
<dbReference type="KEGG" id="syc:syc1640_d"/>
<dbReference type="eggNOG" id="COG3010">
    <property type="taxonomic scope" value="Bacteria"/>
</dbReference>
<dbReference type="UniPathway" id="UPA00629">
    <property type="reaction ID" value="UER00682"/>
</dbReference>
<dbReference type="Proteomes" id="UP000001175">
    <property type="component" value="Chromosome"/>
</dbReference>
<dbReference type="GO" id="GO:0005829">
    <property type="term" value="C:cytosol"/>
    <property type="evidence" value="ECO:0007669"/>
    <property type="project" value="TreeGrafter"/>
</dbReference>
<dbReference type="GO" id="GO:0047465">
    <property type="term" value="F:N-acylglucosamine-6-phosphate 2-epimerase activity"/>
    <property type="evidence" value="ECO:0007669"/>
    <property type="project" value="UniProtKB-EC"/>
</dbReference>
<dbReference type="GO" id="GO:0005975">
    <property type="term" value="P:carbohydrate metabolic process"/>
    <property type="evidence" value="ECO:0007669"/>
    <property type="project" value="UniProtKB-UniRule"/>
</dbReference>
<dbReference type="GO" id="GO:0006053">
    <property type="term" value="P:N-acetylmannosamine catabolic process"/>
    <property type="evidence" value="ECO:0007669"/>
    <property type="project" value="TreeGrafter"/>
</dbReference>
<dbReference type="GO" id="GO:0019262">
    <property type="term" value="P:N-acetylneuraminate catabolic process"/>
    <property type="evidence" value="ECO:0007669"/>
    <property type="project" value="UniProtKB-UniRule"/>
</dbReference>
<dbReference type="CDD" id="cd04729">
    <property type="entry name" value="NanE"/>
    <property type="match status" value="1"/>
</dbReference>
<dbReference type="Gene3D" id="3.20.20.70">
    <property type="entry name" value="Aldolase class I"/>
    <property type="match status" value="1"/>
</dbReference>
<dbReference type="HAMAP" id="MF_01235">
    <property type="entry name" value="ManNAc6P_epimer"/>
    <property type="match status" value="1"/>
</dbReference>
<dbReference type="InterPro" id="IPR013785">
    <property type="entry name" value="Aldolase_TIM"/>
</dbReference>
<dbReference type="InterPro" id="IPR007260">
    <property type="entry name" value="NanE"/>
</dbReference>
<dbReference type="InterPro" id="IPR011060">
    <property type="entry name" value="RibuloseP-bd_barrel"/>
</dbReference>
<dbReference type="NCBIfam" id="NF002231">
    <property type="entry name" value="PRK01130.1"/>
    <property type="match status" value="1"/>
</dbReference>
<dbReference type="PANTHER" id="PTHR36204">
    <property type="entry name" value="N-ACETYLMANNOSAMINE-6-PHOSPHATE 2-EPIMERASE-RELATED"/>
    <property type="match status" value="1"/>
</dbReference>
<dbReference type="PANTHER" id="PTHR36204:SF1">
    <property type="entry name" value="N-ACETYLMANNOSAMINE-6-PHOSPHATE 2-EPIMERASE-RELATED"/>
    <property type="match status" value="1"/>
</dbReference>
<dbReference type="Pfam" id="PF04131">
    <property type="entry name" value="NanE"/>
    <property type="match status" value="1"/>
</dbReference>
<dbReference type="SUPFAM" id="SSF51366">
    <property type="entry name" value="Ribulose-phoshate binding barrel"/>
    <property type="match status" value="1"/>
</dbReference>
<evidence type="ECO:0000255" key="1">
    <source>
        <dbReference type="HAMAP-Rule" id="MF_01235"/>
    </source>
</evidence>